<comment type="function">
    <text evidence="1">Catalyzes the transfer of a ribosyl phosphate group from 5-phosphoribose 1-diphosphate to orotate, leading to the formation of orotidine monophosphate (OMP).</text>
</comment>
<comment type="catalytic activity">
    <reaction evidence="1">
        <text>orotidine 5'-phosphate + diphosphate = orotate + 5-phospho-alpha-D-ribose 1-diphosphate</text>
        <dbReference type="Rhea" id="RHEA:10380"/>
        <dbReference type="ChEBI" id="CHEBI:30839"/>
        <dbReference type="ChEBI" id="CHEBI:33019"/>
        <dbReference type="ChEBI" id="CHEBI:57538"/>
        <dbReference type="ChEBI" id="CHEBI:58017"/>
        <dbReference type="EC" id="2.4.2.10"/>
    </reaction>
</comment>
<comment type="cofactor">
    <cofactor evidence="1">
        <name>Mg(2+)</name>
        <dbReference type="ChEBI" id="CHEBI:18420"/>
    </cofactor>
</comment>
<comment type="pathway">
    <text evidence="1">Pyrimidine metabolism; UMP biosynthesis via de novo pathway; UMP from orotate: step 1/2.</text>
</comment>
<comment type="subunit">
    <text evidence="1">Homodimer.</text>
</comment>
<comment type="similarity">
    <text evidence="1">Belongs to the purine/pyrimidine phosphoribosyltransferase family. PyrE subfamily.</text>
</comment>
<protein>
    <recommendedName>
        <fullName evidence="1">Orotate phosphoribosyltransferase</fullName>
        <shortName evidence="1">OPRT</shortName>
        <shortName evidence="1">OPRTase</shortName>
        <ecNumber evidence="1">2.4.2.10</ecNumber>
    </recommendedName>
</protein>
<gene>
    <name evidence="1" type="primary">pyrE</name>
    <name type="ordered locus">Smlt0411</name>
</gene>
<evidence type="ECO:0000255" key="1">
    <source>
        <dbReference type="HAMAP-Rule" id="MF_01208"/>
    </source>
</evidence>
<name>PYRE_STRMK</name>
<feature type="chain" id="PRO_1000138835" description="Orotate phosphoribosyltransferase">
    <location>
        <begin position="1"/>
        <end position="219"/>
    </location>
</feature>
<feature type="binding site" description="in other chain" evidence="1">
    <location>
        <position position="26"/>
    </location>
    <ligand>
        <name>5-phospho-alpha-D-ribose 1-diphosphate</name>
        <dbReference type="ChEBI" id="CHEBI:58017"/>
        <note>ligand shared between dimeric partners</note>
    </ligand>
</feature>
<feature type="binding site" evidence="1">
    <location>
        <begin position="34"/>
        <end position="35"/>
    </location>
    <ligand>
        <name>orotate</name>
        <dbReference type="ChEBI" id="CHEBI:30839"/>
    </ligand>
</feature>
<feature type="binding site" description="in other chain" evidence="1">
    <location>
        <begin position="72"/>
        <end position="73"/>
    </location>
    <ligand>
        <name>5-phospho-alpha-D-ribose 1-diphosphate</name>
        <dbReference type="ChEBI" id="CHEBI:58017"/>
        <note>ligand shared between dimeric partners</note>
    </ligand>
</feature>
<feature type="binding site" evidence="1">
    <location>
        <position position="98"/>
    </location>
    <ligand>
        <name>5-phospho-alpha-D-ribose 1-diphosphate</name>
        <dbReference type="ChEBI" id="CHEBI:58017"/>
        <note>ligand shared between dimeric partners</note>
    </ligand>
</feature>
<feature type="binding site" description="in other chain" evidence="1">
    <location>
        <position position="99"/>
    </location>
    <ligand>
        <name>5-phospho-alpha-D-ribose 1-diphosphate</name>
        <dbReference type="ChEBI" id="CHEBI:58017"/>
        <note>ligand shared between dimeric partners</note>
    </ligand>
</feature>
<feature type="binding site" evidence="1">
    <location>
        <position position="102"/>
    </location>
    <ligand>
        <name>5-phospho-alpha-D-ribose 1-diphosphate</name>
        <dbReference type="ChEBI" id="CHEBI:58017"/>
        <note>ligand shared between dimeric partners</note>
    </ligand>
</feature>
<feature type="binding site" evidence="1">
    <location>
        <position position="104"/>
    </location>
    <ligand>
        <name>5-phospho-alpha-D-ribose 1-diphosphate</name>
        <dbReference type="ChEBI" id="CHEBI:58017"/>
        <note>ligand shared between dimeric partners</note>
    </ligand>
</feature>
<feature type="binding site" description="in other chain" evidence="1">
    <location>
        <begin position="124"/>
        <end position="132"/>
    </location>
    <ligand>
        <name>5-phospho-alpha-D-ribose 1-diphosphate</name>
        <dbReference type="ChEBI" id="CHEBI:58017"/>
        <note>ligand shared between dimeric partners</note>
    </ligand>
</feature>
<feature type="binding site" evidence="1">
    <location>
        <position position="128"/>
    </location>
    <ligand>
        <name>orotate</name>
        <dbReference type="ChEBI" id="CHEBI:30839"/>
    </ligand>
</feature>
<feature type="binding site" evidence="1">
    <location>
        <position position="156"/>
    </location>
    <ligand>
        <name>orotate</name>
        <dbReference type="ChEBI" id="CHEBI:30839"/>
    </ligand>
</feature>
<reference key="1">
    <citation type="journal article" date="2008" name="Genome Biol.">
        <title>The complete genome, comparative and functional analysis of Stenotrophomonas maltophilia reveals an organism heavily shielded by drug resistance determinants.</title>
        <authorList>
            <person name="Crossman L.C."/>
            <person name="Gould V.C."/>
            <person name="Dow J.M."/>
            <person name="Vernikos G.S."/>
            <person name="Okazaki A."/>
            <person name="Sebaihia M."/>
            <person name="Saunders D."/>
            <person name="Arrowsmith C."/>
            <person name="Carver T."/>
            <person name="Peters N."/>
            <person name="Adlem E."/>
            <person name="Kerhornou A."/>
            <person name="Lord A."/>
            <person name="Murphy L."/>
            <person name="Seeger K."/>
            <person name="Squares R."/>
            <person name="Rutter S."/>
            <person name="Quail M.A."/>
            <person name="Rajandream M.A."/>
            <person name="Harris D."/>
            <person name="Churcher C."/>
            <person name="Bentley S.D."/>
            <person name="Parkhill J."/>
            <person name="Thomson N.R."/>
            <person name="Avison M.B."/>
        </authorList>
    </citation>
    <scope>NUCLEOTIDE SEQUENCE [LARGE SCALE GENOMIC DNA]</scope>
    <source>
        <strain>K279a</strain>
    </source>
</reference>
<sequence>MSDHRHRFLQLALTADALRFGQFTLKSGRLSPYFFNAGRFDSGSLLSQLGACYADAIDASGIKYDVVFGPAYKGIPLATAMACELAQRGRDLPLSFNRKEAKDHGEGGQLIGADMQGKRVLIVDDVITAGTAIREALGIIRAAGGTPAGIVVALDRQEIASETDRRSAAQSVAEEAGIPVIAVASLADLLDFASGNPELVGYRQPLEAYRAQYGVRSIR</sequence>
<organism>
    <name type="scientific">Stenotrophomonas maltophilia (strain K279a)</name>
    <dbReference type="NCBI Taxonomy" id="522373"/>
    <lineage>
        <taxon>Bacteria</taxon>
        <taxon>Pseudomonadati</taxon>
        <taxon>Pseudomonadota</taxon>
        <taxon>Gammaproteobacteria</taxon>
        <taxon>Lysobacterales</taxon>
        <taxon>Lysobacteraceae</taxon>
        <taxon>Stenotrophomonas</taxon>
        <taxon>Stenotrophomonas maltophilia group</taxon>
    </lineage>
</organism>
<accession>B2FJX2</accession>
<keyword id="KW-0328">Glycosyltransferase</keyword>
<keyword id="KW-0460">Magnesium</keyword>
<keyword id="KW-0665">Pyrimidine biosynthesis</keyword>
<keyword id="KW-1185">Reference proteome</keyword>
<keyword id="KW-0808">Transferase</keyword>
<dbReference type="EC" id="2.4.2.10" evidence="1"/>
<dbReference type="EMBL" id="AM743169">
    <property type="protein sequence ID" value="CAQ44009.1"/>
    <property type="molecule type" value="Genomic_DNA"/>
</dbReference>
<dbReference type="RefSeq" id="WP_005407772.1">
    <property type="nucleotide sequence ID" value="NC_010943.1"/>
</dbReference>
<dbReference type="SMR" id="B2FJX2"/>
<dbReference type="EnsemblBacteria" id="CAQ44009">
    <property type="protein sequence ID" value="CAQ44009"/>
    <property type="gene ID" value="Smlt0411"/>
</dbReference>
<dbReference type="GeneID" id="93831457"/>
<dbReference type="KEGG" id="sml:Smlt0411"/>
<dbReference type="eggNOG" id="COG0461">
    <property type="taxonomic scope" value="Bacteria"/>
</dbReference>
<dbReference type="HOGENOM" id="CLU_074878_0_1_6"/>
<dbReference type="UniPathway" id="UPA00070">
    <property type="reaction ID" value="UER00119"/>
</dbReference>
<dbReference type="Proteomes" id="UP000008840">
    <property type="component" value="Chromosome"/>
</dbReference>
<dbReference type="GO" id="GO:0005737">
    <property type="term" value="C:cytoplasm"/>
    <property type="evidence" value="ECO:0007669"/>
    <property type="project" value="TreeGrafter"/>
</dbReference>
<dbReference type="GO" id="GO:0000287">
    <property type="term" value="F:magnesium ion binding"/>
    <property type="evidence" value="ECO:0007669"/>
    <property type="project" value="UniProtKB-UniRule"/>
</dbReference>
<dbReference type="GO" id="GO:0004588">
    <property type="term" value="F:orotate phosphoribosyltransferase activity"/>
    <property type="evidence" value="ECO:0007669"/>
    <property type="project" value="UniProtKB-UniRule"/>
</dbReference>
<dbReference type="GO" id="GO:0006207">
    <property type="term" value="P:'de novo' pyrimidine nucleobase biosynthetic process"/>
    <property type="evidence" value="ECO:0007669"/>
    <property type="project" value="TreeGrafter"/>
</dbReference>
<dbReference type="GO" id="GO:0044205">
    <property type="term" value="P:'de novo' UMP biosynthetic process"/>
    <property type="evidence" value="ECO:0007669"/>
    <property type="project" value="UniProtKB-UniRule"/>
</dbReference>
<dbReference type="GO" id="GO:0046132">
    <property type="term" value="P:pyrimidine ribonucleoside biosynthetic process"/>
    <property type="evidence" value="ECO:0007669"/>
    <property type="project" value="TreeGrafter"/>
</dbReference>
<dbReference type="CDD" id="cd06223">
    <property type="entry name" value="PRTases_typeI"/>
    <property type="match status" value="1"/>
</dbReference>
<dbReference type="FunFam" id="3.40.50.2020:FF:000052">
    <property type="entry name" value="Orotate phosphoribosyltransferase"/>
    <property type="match status" value="1"/>
</dbReference>
<dbReference type="Gene3D" id="3.40.50.2020">
    <property type="match status" value="1"/>
</dbReference>
<dbReference type="HAMAP" id="MF_01208">
    <property type="entry name" value="PyrE"/>
    <property type="match status" value="1"/>
</dbReference>
<dbReference type="InterPro" id="IPR023031">
    <property type="entry name" value="OPRT"/>
</dbReference>
<dbReference type="InterPro" id="IPR004467">
    <property type="entry name" value="Or_phspho_trans_dom"/>
</dbReference>
<dbReference type="InterPro" id="IPR000836">
    <property type="entry name" value="PRibTrfase_dom"/>
</dbReference>
<dbReference type="InterPro" id="IPR029057">
    <property type="entry name" value="PRTase-like"/>
</dbReference>
<dbReference type="NCBIfam" id="TIGR00336">
    <property type="entry name" value="pyrE"/>
    <property type="match status" value="1"/>
</dbReference>
<dbReference type="PANTHER" id="PTHR46683">
    <property type="entry name" value="OROTATE PHOSPHORIBOSYLTRANSFERASE 1-RELATED"/>
    <property type="match status" value="1"/>
</dbReference>
<dbReference type="PANTHER" id="PTHR46683:SF1">
    <property type="entry name" value="OROTATE PHOSPHORIBOSYLTRANSFERASE 1-RELATED"/>
    <property type="match status" value="1"/>
</dbReference>
<dbReference type="Pfam" id="PF00156">
    <property type="entry name" value="Pribosyltran"/>
    <property type="match status" value="1"/>
</dbReference>
<dbReference type="SUPFAM" id="SSF53271">
    <property type="entry name" value="PRTase-like"/>
    <property type="match status" value="1"/>
</dbReference>
<dbReference type="PROSITE" id="PS00103">
    <property type="entry name" value="PUR_PYR_PR_TRANSFER"/>
    <property type="match status" value="1"/>
</dbReference>
<proteinExistence type="inferred from homology"/>